<sequence length="442" mass="49761">MQKEVNIIGAGLAGCEAAYLLANNGVKVNLFEVKSLMKNDIQKTNDLGELVCSNTLRSKSKKNAAGILKNEMKLLNSLVIKAALENEIPGDDALSVDRFGFSKYITDKIKNHKNINLIEQEVSEVDYTKVTIIASGPLTTDKLGKNIELMTGNEKLFFLDASAPIITKDSIDFNKVYWASRHNDGKDGQYICIPLNEEQFNAFVEELKNAETIKLKSFEKEIYFKGCQPIEQIAKTSKKVLLNGPLSPNNLIDENGNTPFAVVQLRQDDAIDSLYNFVGFQTNIKWPEQKRILQTLPGLENLNIVRFGVMHKNYYINSPKLLNRSLQVKRNKNIFFAGQITGVEGYIESASSGILTAINVLAYLNNIKIEQPSRKSMLGALNFYITNPKHDKLKPMKCNLGILDQQNKNAKSEFYSFDESEREIRRFIKGINNFAKIGENNE</sequence>
<protein>
    <recommendedName>
        <fullName evidence="1">Methylenetetrahydrofolate--tRNA-(uracil-5-)-methyltransferase TrmFO 1</fullName>
        <ecNumber evidence="1">2.1.1.74</ecNumber>
    </recommendedName>
    <alternativeName>
        <fullName evidence="1">Folate-dependent tRNA (uracil-5-)-methyltransferase 1</fullName>
    </alternativeName>
    <alternativeName>
        <fullName evidence="1">Folate-dependent tRNA(M-5-U54)-methyltransferase 1</fullName>
    </alternativeName>
</protein>
<organism>
    <name type="scientific">Mesoplasma florum (strain ATCC 33453 / NBRC 100688 / NCTC 11704 / L1)</name>
    <name type="common">Acholeplasma florum</name>
    <dbReference type="NCBI Taxonomy" id="265311"/>
    <lineage>
        <taxon>Bacteria</taxon>
        <taxon>Bacillati</taxon>
        <taxon>Mycoplasmatota</taxon>
        <taxon>Mollicutes</taxon>
        <taxon>Entomoplasmatales</taxon>
        <taxon>Entomoplasmataceae</taxon>
        <taxon>Mesoplasma</taxon>
    </lineage>
</organism>
<dbReference type="EC" id="2.1.1.74" evidence="1"/>
<dbReference type="EMBL" id="AE017263">
    <property type="protein sequence ID" value="AAT75599.1"/>
    <property type="molecule type" value="Genomic_DNA"/>
</dbReference>
<dbReference type="RefSeq" id="WP_011183139.1">
    <property type="nucleotide sequence ID" value="NC_006055.1"/>
</dbReference>
<dbReference type="RefSeq" id="YP_053483.1">
    <property type="nucleotide sequence ID" value="NC_006055.1"/>
</dbReference>
<dbReference type="SMR" id="Q6F1M4"/>
<dbReference type="STRING" id="265311.Mfl242"/>
<dbReference type="PaxDb" id="265311-Mfl242"/>
<dbReference type="EnsemblBacteria" id="AAT75599">
    <property type="protein sequence ID" value="AAT75599"/>
    <property type="gene ID" value="Mfl242"/>
</dbReference>
<dbReference type="GeneID" id="2897836"/>
<dbReference type="KEGG" id="mfl:Mfl242"/>
<dbReference type="PATRIC" id="fig|265311.5.peg.242"/>
<dbReference type="eggNOG" id="COG1206">
    <property type="taxonomic scope" value="Bacteria"/>
</dbReference>
<dbReference type="HOGENOM" id="CLU_033057_1_0_14"/>
<dbReference type="OrthoDB" id="9803114at2"/>
<dbReference type="Proteomes" id="UP000006647">
    <property type="component" value="Chromosome"/>
</dbReference>
<dbReference type="GO" id="GO:0005829">
    <property type="term" value="C:cytosol"/>
    <property type="evidence" value="ECO:0007669"/>
    <property type="project" value="TreeGrafter"/>
</dbReference>
<dbReference type="GO" id="GO:0050660">
    <property type="term" value="F:flavin adenine dinucleotide binding"/>
    <property type="evidence" value="ECO:0007669"/>
    <property type="project" value="UniProtKB-UniRule"/>
</dbReference>
<dbReference type="GO" id="GO:0047151">
    <property type="term" value="F:tRNA (uracil(54)-C5)-methyltransferase activity, 5,10-methylenetetrahydrofolate-dependent"/>
    <property type="evidence" value="ECO:0007669"/>
    <property type="project" value="UniProtKB-UniRule"/>
</dbReference>
<dbReference type="GO" id="GO:0030488">
    <property type="term" value="P:tRNA methylation"/>
    <property type="evidence" value="ECO:0007669"/>
    <property type="project" value="TreeGrafter"/>
</dbReference>
<dbReference type="GO" id="GO:0002098">
    <property type="term" value="P:tRNA wobble uridine modification"/>
    <property type="evidence" value="ECO:0007669"/>
    <property type="project" value="TreeGrafter"/>
</dbReference>
<dbReference type="Gene3D" id="3.50.50.60">
    <property type="entry name" value="FAD/NAD(P)-binding domain"/>
    <property type="match status" value="2"/>
</dbReference>
<dbReference type="HAMAP" id="MF_01037">
    <property type="entry name" value="TrmFO"/>
    <property type="match status" value="1"/>
</dbReference>
<dbReference type="InterPro" id="IPR036188">
    <property type="entry name" value="FAD/NAD-bd_sf"/>
</dbReference>
<dbReference type="InterPro" id="IPR002218">
    <property type="entry name" value="MnmG-rel"/>
</dbReference>
<dbReference type="InterPro" id="IPR020595">
    <property type="entry name" value="MnmG-rel_CS"/>
</dbReference>
<dbReference type="InterPro" id="IPR040131">
    <property type="entry name" value="MnmG_N"/>
</dbReference>
<dbReference type="InterPro" id="IPR004417">
    <property type="entry name" value="TrmFO"/>
</dbReference>
<dbReference type="NCBIfam" id="TIGR00137">
    <property type="entry name" value="gid_trmFO"/>
    <property type="match status" value="1"/>
</dbReference>
<dbReference type="NCBIfam" id="NF003739">
    <property type="entry name" value="PRK05335.1"/>
    <property type="match status" value="1"/>
</dbReference>
<dbReference type="PANTHER" id="PTHR11806">
    <property type="entry name" value="GLUCOSE INHIBITED DIVISION PROTEIN A"/>
    <property type="match status" value="1"/>
</dbReference>
<dbReference type="PANTHER" id="PTHR11806:SF2">
    <property type="entry name" value="METHYLENETETRAHYDROFOLATE--TRNA-(URACIL-5-)-METHYLTRANSFERASE TRMFO"/>
    <property type="match status" value="1"/>
</dbReference>
<dbReference type="Pfam" id="PF01134">
    <property type="entry name" value="GIDA"/>
    <property type="match status" value="1"/>
</dbReference>
<dbReference type="SUPFAM" id="SSF51905">
    <property type="entry name" value="FAD/NAD(P)-binding domain"/>
    <property type="match status" value="1"/>
</dbReference>
<dbReference type="PROSITE" id="PS01281">
    <property type="entry name" value="GIDA_2"/>
    <property type="match status" value="1"/>
</dbReference>
<comment type="function">
    <text evidence="1">Catalyzes the folate-dependent formation of 5-methyl-uridine at position 54 (M-5-U54) in all tRNAs.</text>
</comment>
<comment type="catalytic activity">
    <reaction evidence="1">
        <text>uridine(54) in tRNA + (6R)-5,10-methylene-5,6,7,8-tetrahydrofolate + NADH + H(+) = 5-methyluridine(54) in tRNA + (6S)-5,6,7,8-tetrahydrofolate + NAD(+)</text>
        <dbReference type="Rhea" id="RHEA:16873"/>
        <dbReference type="Rhea" id="RHEA-COMP:10167"/>
        <dbReference type="Rhea" id="RHEA-COMP:10193"/>
        <dbReference type="ChEBI" id="CHEBI:15378"/>
        <dbReference type="ChEBI" id="CHEBI:15636"/>
        <dbReference type="ChEBI" id="CHEBI:57453"/>
        <dbReference type="ChEBI" id="CHEBI:57540"/>
        <dbReference type="ChEBI" id="CHEBI:57945"/>
        <dbReference type="ChEBI" id="CHEBI:65315"/>
        <dbReference type="ChEBI" id="CHEBI:74447"/>
        <dbReference type="EC" id="2.1.1.74"/>
    </reaction>
</comment>
<comment type="catalytic activity">
    <reaction evidence="1">
        <text>uridine(54) in tRNA + (6R)-5,10-methylene-5,6,7,8-tetrahydrofolate + NADPH + H(+) = 5-methyluridine(54) in tRNA + (6S)-5,6,7,8-tetrahydrofolate + NADP(+)</text>
        <dbReference type="Rhea" id="RHEA:62372"/>
        <dbReference type="Rhea" id="RHEA-COMP:10167"/>
        <dbReference type="Rhea" id="RHEA-COMP:10193"/>
        <dbReference type="ChEBI" id="CHEBI:15378"/>
        <dbReference type="ChEBI" id="CHEBI:15636"/>
        <dbReference type="ChEBI" id="CHEBI:57453"/>
        <dbReference type="ChEBI" id="CHEBI:57783"/>
        <dbReference type="ChEBI" id="CHEBI:58349"/>
        <dbReference type="ChEBI" id="CHEBI:65315"/>
        <dbReference type="ChEBI" id="CHEBI:74447"/>
        <dbReference type="EC" id="2.1.1.74"/>
    </reaction>
</comment>
<comment type="cofactor">
    <cofactor evidence="1">
        <name>FAD</name>
        <dbReference type="ChEBI" id="CHEBI:57692"/>
    </cofactor>
</comment>
<comment type="subcellular location">
    <subcellularLocation>
        <location evidence="1">Cytoplasm</location>
    </subcellularLocation>
</comment>
<comment type="similarity">
    <text evidence="1">Belongs to the MnmG family. TrmFO subfamily.</text>
</comment>
<gene>
    <name evidence="1" type="primary">trmFO1</name>
    <name type="ordered locus">Mfl242</name>
</gene>
<accession>Q6F1M4</accession>
<keyword id="KW-0963">Cytoplasm</keyword>
<keyword id="KW-0274">FAD</keyword>
<keyword id="KW-0285">Flavoprotein</keyword>
<keyword id="KW-0489">Methyltransferase</keyword>
<keyword id="KW-0520">NAD</keyword>
<keyword id="KW-0521">NADP</keyword>
<keyword id="KW-1185">Reference proteome</keyword>
<keyword id="KW-0808">Transferase</keyword>
<keyword id="KW-0819">tRNA processing</keyword>
<reference key="1">
    <citation type="submission" date="2004-06" db="EMBL/GenBank/DDBJ databases">
        <authorList>
            <person name="Birren B.W."/>
            <person name="Stange-Thomann N."/>
            <person name="Hafez N."/>
            <person name="DeCaprio D."/>
            <person name="Fisher S."/>
            <person name="Butler J."/>
            <person name="Elkins T."/>
            <person name="Kodira C.D."/>
            <person name="Major J."/>
            <person name="Wang S."/>
            <person name="Nicol R."/>
            <person name="Nusbaum C."/>
        </authorList>
    </citation>
    <scope>NUCLEOTIDE SEQUENCE [LARGE SCALE GENOMIC DNA]</scope>
    <source>
        <strain>ATCC 33453 / NBRC 100688 / NCTC 11704 / L1</strain>
    </source>
</reference>
<feature type="chain" id="PRO_0000346354" description="Methylenetetrahydrofolate--tRNA-(uracil-5-)-methyltransferase TrmFO 1">
    <location>
        <begin position="1"/>
        <end position="442"/>
    </location>
</feature>
<feature type="binding site" evidence="1">
    <location>
        <begin position="9"/>
        <end position="14"/>
    </location>
    <ligand>
        <name>FAD</name>
        <dbReference type="ChEBI" id="CHEBI:57692"/>
    </ligand>
</feature>
<name>TMFO1_MESFL</name>
<proteinExistence type="inferred from homology"/>
<evidence type="ECO:0000255" key="1">
    <source>
        <dbReference type="HAMAP-Rule" id="MF_01037"/>
    </source>
</evidence>